<reference key="1">
    <citation type="journal article" date="1994" name="EMBO J.">
        <title>Subunits of the Saccharomyces cerevisiae signal recognition particle required for its functional expression.</title>
        <authorList>
            <person name="Brown J.D."/>
            <person name="Hann B.C."/>
            <person name="Medzihradszky K.F."/>
            <person name="Niwa M."/>
            <person name="Burlingame A.L."/>
            <person name="Walter P."/>
        </authorList>
    </citation>
    <scope>NUCLEOTIDE SEQUENCE [GENOMIC DNA]</scope>
    <scope>PARTIAL PROTEIN SEQUENCE</scope>
    <scope>FUNCTION</scope>
    <scope>IDENTIFICATION IN THE SRP COMPLEX</scope>
    <source>
        <strain>ATCC 204508 / S288c</strain>
    </source>
</reference>
<reference key="2">
    <citation type="journal article" date="1997" name="Nature">
        <title>The nucleotide sequence of Saccharomyces cerevisiae chromosome XVI.</title>
        <authorList>
            <person name="Bussey H."/>
            <person name="Storms R.K."/>
            <person name="Ahmed A."/>
            <person name="Albermann K."/>
            <person name="Allen E."/>
            <person name="Ansorge W."/>
            <person name="Araujo R."/>
            <person name="Aparicio A."/>
            <person name="Barrell B.G."/>
            <person name="Badcock K."/>
            <person name="Benes V."/>
            <person name="Botstein D."/>
            <person name="Bowman S."/>
            <person name="Brueckner M."/>
            <person name="Carpenter J."/>
            <person name="Cherry J.M."/>
            <person name="Chung E."/>
            <person name="Churcher C.M."/>
            <person name="Coster F."/>
            <person name="Davis K."/>
            <person name="Davis R.W."/>
            <person name="Dietrich F.S."/>
            <person name="Delius H."/>
            <person name="DiPaolo T."/>
            <person name="Dubois E."/>
            <person name="Duesterhoeft A."/>
            <person name="Duncan M."/>
            <person name="Floeth M."/>
            <person name="Fortin N."/>
            <person name="Friesen J.D."/>
            <person name="Fritz C."/>
            <person name="Goffeau A."/>
            <person name="Hall J."/>
            <person name="Hebling U."/>
            <person name="Heumann K."/>
            <person name="Hilbert H."/>
            <person name="Hillier L.W."/>
            <person name="Hunicke-Smith S."/>
            <person name="Hyman R.W."/>
            <person name="Johnston M."/>
            <person name="Kalman S."/>
            <person name="Kleine K."/>
            <person name="Komp C."/>
            <person name="Kurdi O."/>
            <person name="Lashkari D."/>
            <person name="Lew H."/>
            <person name="Lin A."/>
            <person name="Lin D."/>
            <person name="Louis E.J."/>
            <person name="Marathe R."/>
            <person name="Messenguy F."/>
            <person name="Mewes H.-W."/>
            <person name="Mirtipati S."/>
            <person name="Moestl D."/>
            <person name="Mueller-Auer S."/>
            <person name="Namath A."/>
            <person name="Nentwich U."/>
            <person name="Oefner P."/>
            <person name="Pearson D."/>
            <person name="Petel F.X."/>
            <person name="Pohl T.M."/>
            <person name="Purnelle B."/>
            <person name="Rajandream M.A."/>
            <person name="Rechmann S."/>
            <person name="Rieger M."/>
            <person name="Riles L."/>
            <person name="Roberts D."/>
            <person name="Schaefer M."/>
            <person name="Scharfe M."/>
            <person name="Scherens B."/>
            <person name="Schramm S."/>
            <person name="Schroeder M."/>
            <person name="Sdicu A.-M."/>
            <person name="Tettelin H."/>
            <person name="Urrestarazu L.A."/>
            <person name="Ushinsky S."/>
            <person name="Vierendeels F."/>
            <person name="Vissers S."/>
            <person name="Voss H."/>
            <person name="Walsh S.V."/>
            <person name="Wambutt R."/>
            <person name="Wang Y."/>
            <person name="Wedler E."/>
            <person name="Wedler H."/>
            <person name="Winnett E."/>
            <person name="Zhong W.-W."/>
            <person name="Zollner A."/>
            <person name="Vo D.H."/>
            <person name="Hani J."/>
        </authorList>
    </citation>
    <scope>NUCLEOTIDE SEQUENCE [LARGE SCALE GENOMIC DNA]</scope>
    <source>
        <strain>ATCC 204508 / S288c</strain>
    </source>
</reference>
<reference key="3">
    <citation type="journal article" date="2014" name="G3 (Bethesda)">
        <title>The reference genome sequence of Saccharomyces cerevisiae: Then and now.</title>
        <authorList>
            <person name="Engel S.R."/>
            <person name="Dietrich F.S."/>
            <person name="Fisk D.G."/>
            <person name="Binkley G."/>
            <person name="Balakrishnan R."/>
            <person name="Costanzo M.C."/>
            <person name="Dwight S.S."/>
            <person name="Hitz B.C."/>
            <person name="Karra K."/>
            <person name="Nash R.S."/>
            <person name="Weng S."/>
            <person name="Wong E.D."/>
            <person name="Lloyd P."/>
            <person name="Skrzypek M.S."/>
            <person name="Miyasato S.R."/>
            <person name="Simison M."/>
            <person name="Cherry J.M."/>
        </authorList>
    </citation>
    <scope>GENOME REANNOTATION</scope>
    <source>
        <strain>ATCC 204508 / S288c</strain>
    </source>
</reference>
<reference key="4">
    <citation type="journal article" date="2001" name="J. Cell Biol.">
        <title>Biogenesis of the signal recognition particle (SRP) involves import of SRP proteins into the nucleolus, assembly with the SRP-RNA, and Xpo1p-mediated export.</title>
        <authorList>
            <person name="Grosshans H."/>
            <person name="Deinert K."/>
            <person name="Hurt E.C."/>
            <person name="Simos G."/>
        </authorList>
    </citation>
    <scope>ASSEMBLY OF THE SRP COMPLEX</scope>
    <scope>SUBUNIT</scope>
    <scope>SUBCELLULAR LOCATION</scope>
</reference>
<reference key="5">
    <citation type="journal article" date="2003" name="Nature">
        <title>Global analysis of protein expression in yeast.</title>
        <authorList>
            <person name="Ghaemmaghami S."/>
            <person name="Huh W.-K."/>
            <person name="Bower K."/>
            <person name="Howson R.W."/>
            <person name="Belle A."/>
            <person name="Dephoure N."/>
            <person name="O'Shea E.K."/>
            <person name="Weissman J.S."/>
        </authorList>
    </citation>
    <scope>LEVEL OF PROTEIN EXPRESSION [LARGE SCALE ANALYSIS]</scope>
</reference>
<reference key="6">
    <citation type="journal article" date="2009" name="Science">
        <title>Global analysis of Cdk1 substrate phosphorylation sites provides insights into evolution.</title>
        <authorList>
            <person name="Holt L.J."/>
            <person name="Tuch B.B."/>
            <person name="Villen J."/>
            <person name="Johnson A.D."/>
            <person name="Gygi S.P."/>
            <person name="Morgan D.O."/>
        </authorList>
    </citation>
    <scope>IDENTIFICATION BY MASS SPECTROMETRY [LARGE SCALE ANALYSIS]</scope>
</reference>
<reference key="7">
    <citation type="journal article" date="2012" name="Proc. Natl. Acad. Sci. U.S.A.">
        <title>N-terminal acetylome analyses and functional insights of the N-terminal acetyltransferase NatB.</title>
        <authorList>
            <person name="Van Damme P."/>
            <person name="Lasa M."/>
            <person name="Polevoda B."/>
            <person name="Gazquez C."/>
            <person name="Elosegui-Artola A."/>
            <person name="Kim D.S."/>
            <person name="De Juan-Pardo E."/>
            <person name="Demeyer K."/>
            <person name="Hole K."/>
            <person name="Larrea E."/>
            <person name="Timmerman E."/>
            <person name="Prieto J."/>
            <person name="Arnesen T."/>
            <person name="Sherman F."/>
            <person name="Gevaert K."/>
            <person name="Aldabe R."/>
        </authorList>
    </citation>
    <scope>IDENTIFICATION BY MASS SPECTROMETRY [LARGE SCALE ANALYSIS]</scope>
</reference>
<keyword id="KW-0963">Cytoplasm</keyword>
<keyword id="KW-0903">Direct protein sequencing</keyword>
<keyword id="KW-0539">Nucleus</keyword>
<keyword id="KW-1185">Reference proteome</keyword>
<keyword id="KW-0687">Ribonucleoprotein</keyword>
<keyword id="KW-0694">RNA-binding</keyword>
<keyword id="KW-0733">Signal recognition particle</keyword>
<sequence length="599" mass="69006">MVAYSPIIATYGNRAEQFLETDSDFAKYHAKLNKKLQHLRSRCHLVTKDTKKYSSKNKYGEINSEDYDNKTKLIGVLILLHAERDLALAETLKLRARQRGKLKKSEEKVLSTRLKKACKTADKLVNVTQNEQQWITRAQYLAFAKLVHSEYLINGKRFKRKDNAKISNNLALVFAALEHLKNLSLLAEEVVDNIVNKYQYSLKQYAGNLITTPEINNFIVERVQSDENKDDELVKLLLDNGFNMKKITTSTEDQKVTTNINWRSFNAKIIDAEVAQFLEQGLSIHPTQITQYTQRLSKLEKALDRHEFFIANHDDQDDIDEMVENSSENNQIILAYIKYNILLTSISRERDLFTHLWNQWLKLNTSLPSKLTKYKEMERIVKNLTKYLSDIMELPGVYSDDELLSQLDLCKLYFQLFLNTGCLSVLYQSKGRYMEALALYVDAYRRLENKLSEIESLDEILLPANLLSLNSVRSLQKRIENGGNSVITLAEYEKRNHGGSLGKYDLTVIEKLDSKKILPTDIQLKNLFPLKPKMLPIPSKPTLFDLAFNYITYDKQEPSASQVKDSVTETESISQTPISNEQTEGEPKKKRGFLGLFGR</sequence>
<feature type="chain" id="PRO_0000135232" description="Signal recognition particle subunit SRP68">
    <location>
        <begin position="1"/>
        <end position="599"/>
    </location>
</feature>
<feature type="region of interest" description="Disordered" evidence="4">
    <location>
        <begin position="559"/>
        <end position="599"/>
    </location>
</feature>
<feature type="compositionally biased region" description="Polar residues" evidence="4">
    <location>
        <begin position="559"/>
        <end position="582"/>
    </location>
</feature>
<accession>P38687</accession>
<accession>D6W3C8</accession>
<organism>
    <name type="scientific">Saccharomyces cerevisiae (strain ATCC 204508 / S288c)</name>
    <name type="common">Baker's yeast</name>
    <dbReference type="NCBI Taxonomy" id="559292"/>
    <lineage>
        <taxon>Eukaryota</taxon>
        <taxon>Fungi</taxon>
        <taxon>Dikarya</taxon>
        <taxon>Ascomycota</taxon>
        <taxon>Saccharomycotina</taxon>
        <taxon>Saccharomycetes</taxon>
        <taxon>Saccharomycetales</taxon>
        <taxon>Saccharomycetaceae</taxon>
        <taxon>Saccharomyces</taxon>
    </lineage>
</organism>
<protein>
    <recommendedName>
        <fullName>Signal recognition particle subunit SRP68</fullName>
    </recommendedName>
    <alternativeName>
        <fullName>Signal recognition particle 68 kDa protein homolog</fullName>
    </alternativeName>
</protein>
<comment type="function">
    <text evidence="3 7">Component of the signal recognition particle (SRP) complex, a ribonucleoprotein complex that mediates the cotranslational targeting of secretory and membrane proteins to the endoplasmic reticulum (ER) (PubMed:7925282). The SRP complex interacts with the signal sequence in nascent secretory and membrane proteins and directs them to the membrane of the ER (By similarity). The SRP complex targets the ribosome-nascent chain complex to the SRP receptor (SR), which is anchored in the ER, where SR compaction and GTPase rearrangement drive cotranslational protein translocation into the ER (By similarity). Binds the signal recognition particle RNA (7SL RNA), SRP72 binds to this complex subsequently (By similarity). The SRP complex possibly participates in the elongation arrest function (PubMed:7925282).</text>
</comment>
<comment type="subunit">
    <text evidence="2 3 5 7">Heterodimer with SRP72 (By similarity). SRP68-SRP72 heterodimer formation is stabilized by the presence of 7SL RNA (By similarity). Component of a fungal signal recognition particle (SRP) complex that consists of a 7SL RNA molecule (scR1) and at least six protein subunits: SRP72, SRP68, SRP54, SEC65, SRP21 and SRP14 (PubMed:11352936, PubMed:7925282).</text>
</comment>
<comment type="subcellular location">
    <subcellularLocation>
        <location evidence="1">Cytoplasm</location>
    </subcellularLocation>
    <subcellularLocation>
        <location evidence="5">Nucleus</location>
        <location evidence="5">Nucleolus</location>
    </subcellularLocation>
</comment>
<comment type="miscellaneous">
    <text evidence="6">Present with 6280 molecules/cell in log phase SD medium.</text>
</comment>
<comment type="similarity">
    <text evidence="8">Belongs to the SRP68 family.</text>
</comment>
<evidence type="ECO:0000250" key="1">
    <source>
        <dbReference type="UniProtKB" id="O74436"/>
    </source>
</evidence>
<evidence type="ECO:0000250" key="2">
    <source>
        <dbReference type="UniProtKB" id="Q00004"/>
    </source>
</evidence>
<evidence type="ECO:0000250" key="3">
    <source>
        <dbReference type="UniProtKB" id="Q9UHB9"/>
    </source>
</evidence>
<evidence type="ECO:0000256" key="4">
    <source>
        <dbReference type="SAM" id="MobiDB-lite"/>
    </source>
</evidence>
<evidence type="ECO:0000269" key="5">
    <source>
    </source>
</evidence>
<evidence type="ECO:0000269" key="6">
    <source>
    </source>
</evidence>
<evidence type="ECO:0000269" key="7">
    <source>
    </source>
</evidence>
<evidence type="ECO:0000305" key="8"/>
<name>SRP68_YEAST</name>
<proteinExistence type="evidence at protein level"/>
<gene>
    <name type="primary">SRP68</name>
    <name type="ordered locus">YPL243W</name>
</gene>
<dbReference type="EMBL" id="L35177">
    <property type="protein sequence ID" value="AAA53401.1"/>
    <property type="molecule type" value="Genomic_DNA"/>
</dbReference>
<dbReference type="EMBL" id="Z67751">
    <property type="protein sequence ID" value="CAA91601.1"/>
    <property type="molecule type" value="Genomic_DNA"/>
</dbReference>
<dbReference type="EMBL" id="Z73599">
    <property type="protein sequence ID" value="CAA97964.1"/>
    <property type="molecule type" value="Genomic_DNA"/>
</dbReference>
<dbReference type="EMBL" id="BK006949">
    <property type="protein sequence ID" value="DAA11194.1"/>
    <property type="molecule type" value="Genomic_DNA"/>
</dbReference>
<dbReference type="PIR" id="S47928">
    <property type="entry name" value="S47928"/>
</dbReference>
<dbReference type="RefSeq" id="NP_015081.1">
    <property type="nucleotide sequence ID" value="NM_001184057.1"/>
</dbReference>
<dbReference type="BioGRID" id="35920">
    <property type="interactions" value="92"/>
</dbReference>
<dbReference type="ComplexPortal" id="CPX-609">
    <property type="entry name" value="Signal recognition particle"/>
</dbReference>
<dbReference type="DIP" id="DIP-6742N"/>
<dbReference type="FunCoup" id="P38687">
    <property type="interactions" value="1121"/>
</dbReference>
<dbReference type="IntAct" id="P38687">
    <property type="interactions" value="26"/>
</dbReference>
<dbReference type="MINT" id="P38687"/>
<dbReference type="STRING" id="4932.YPL243W"/>
<dbReference type="iPTMnet" id="P38687"/>
<dbReference type="PaxDb" id="4932-YPL243W"/>
<dbReference type="PeptideAtlas" id="P38687"/>
<dbReference type="EnsemblFungi" id="YPL243W_mRNA">
    <property type="protein sequence ID" value="YPL243W"/>
    <property type="gene ID" value="YPL243W"/>
</dbReference>
<dbReference type="GeneID" id="855833"/>
<dbReference type="KEGG" id="sce:YPL243W"/>
<dbReference type="AGR" id="SGD:S000006164"/>
<dbReference type="SGD" id="S000006164">
    <property type="gene designation" value="SRP68"/>
</dbReference>
<dbReference type="VEuPathDB" id="FungiDB:YPL243W"/>
<dbReference type="eggNOG" id="KOG2460">
    <property type="taxonomic scope" value="Eukaryota"/>
</dbReference>
<dbReference type="GeneTree" id="ENSGT00390000011856"/>
<dbReference type="HOGENOM" id="CLU_018649_2_1_1"/>
<dbReference type="InParanoid" id="P38687"/>
<dbReference type="OMA" id="LAYIKYN"/>
<dbReference type="OrthoDB" id="10255118at2759"/>
<dbReference type="BioCyc" id="YEAST:G3O-34129-MONOMER"/>
<dbReference type="Reactome" id="R-SCE-1799339">
    <property type="pathway name" value="SRP-dependent cotranslational protein targeting to membrane"/>
</dbReference>
<dbReference type="BioGRID-ORCS" id="855833">
    <property type="hits" value="0 hits in 10 CRISPR screens"/>
</dbReference>
<dbReference type="PRO" id="PR:P38687"/>
<dbReference type="Proteomes" id="UP000002311">
    <property type="component" value="Chromosome XVI"/>
</dbReference>
<dbReference type="RNAct" id="P38687">
    <property type="molecule type" value="protein"/>
</dbReference>
<dbReference type="GO" id="GO:0005737">
    <property type="term" value="C:cytoplasm"/>
    <property type="evidence" value="ECO:0007005"/>
    <property type="project" value="SGD"/>
</dbReference>
<dbReference type="GO" id="GO:0034399">
    <property type="term" value="C:nuclear periphery"/>
    <property type="evidence" value="ECO:0007005"/>
    <property type="project" value="SGD"/>
</dbReference>
<dbReference type="GO" id="GO:0005730">
    <property type="term" value="C:nucleolus"/>
    <property type="evidence" value="ECO:0007669"/>
    <property type="project" value="UniProtKB-SubCell"/>
</dbReference>
<dbReference type="GO" id="GO:0005786">
    <property type="term" value="C:signal recognition particle, endoplasmic reticulum targeting"/>
    <property type="evidence" value="ECO:0000314"/>
    <property type="project" value="SGD"/>
</dbReference>
<dbReference type="GO" id="GO:0008312">
    <property type="term" value="F:7S RNA binding"/>
    <property type="evidence" value="ECO:0007669"/>
    <property type="project" value="InterPro"/>
</dbReference>
<dbReference type="GO" id="GO:0030942">
    <property type="term" value="F:endoplasmic reticulum signal peptide binding"/>
    <property type="evidence" value="ECO:0007669"/>
    <property type="project" value="InterPro"/>
</dbReference>
<dbReference type="GO" id="GO:0005047">
    <property type="term" value="F:signal recognition particle binding"/>
    <property type="evidence" value="ECO:0000318"/>
    <property type="project" value="GO_Central"/>
</dbReference>
<dbReference type="GO" id="GO:0006614">
    <property type="term" value="P:SRP-dependent cotranslational protein targeting to membrane"/>
    <property type="evidence" value="ECO:0000314"/>
    <property type="project" value="SGD"/>
</dbReference>
<dbReference type="GO" id="GO:0006617">
    <property type="term" value="P:SRP-dependent cotranslational protein targeting to membrane, signal sequence recognition"/>
    <property type="evidence" value="ECO:0000303"/>
    <property type="project" value="ComplexPortal"/>
</dbReference>
<dbReference type="CDD" id="cd15481">
    <property type="entry name" value="SRP68-RBD"/>
    <property type="match status" value="1"/>
</dbReference>
<dbReference type="FunFam" id="1.10.3450.40:FF:000005">
    <property type="entry name" value="Signal recognition particle subunit SRP68"/>
    <property type="match status" value="1"/>
</dbReference>
<dbReference type="Gene3D" id="1.10.3450.40">
    <property type="entry name" value="Signal recognition particle, SRP68 subunit, RNA-binding domain"/>
    <property type="match status" value="1"/>
</dbReference>
<dbReference type="InterPro" id="IPR026258">
    <property type="entry name" value="SRP68"/>
</dbReference>
<dbReference type="InterPro" id="IPR034652">
    <property type="entry name" value="SRP68-RBD"/>
</dbReference>
<dbReference type="InterPro" id="IPR038253">
    <property type="entry name" value="SRP68_N_sf"/>
</dbReference>
<dbReference type="PANTHER" id="PTHR12860">
    <property type="entry name" value="SIGNAL RECOGNITION PARTICLE 68 KDA PROTEIN"/>
    <property type="match status" value="1"/>
</dbReference>
<dbReference type="PANTHER" id="PTHR12860:SF0">
    <property type="entry name" value="SIGNAL RECOGNITION PARTICLE SUBUNIT SRP68"/>
    <property type="match status" value="1"/>
</dbReference>
<dbReference type="Pfam" id="PF16969">
    <property type="entry name" value="SRP68"/>
    <property type="match status" value="1"/>
</dbReference>
<dbReference type="PIRSF" id="PIRSF038995">
    <property type="entry name" value="SRP68"/>
    <property type="match status" value="1"/>
</dbReference>